<sequence length="433" mass="47880">MRSVSYVQRVALEFSGSLFPHAICLGDVDNDTLNELVVGDTSGKVSVYKNDDSRPWLTCSCQGMLTCVGVGDVCNKGKNLLVAVSAEGWFHLFDLTPAKVLDASGHHETLIGEEQRPVFKQHIPANTKVMLISDIDGDGCRELVVGYTDRVVRAFRWEELGEGPEHLTGQLVSLKKWMLEGQVDSLSVTLGPLGLPELMVSQPGCAYAILLCTWKKDTGSPPASEGPMDGSRETPAARDVVLHQTSGRIHNKNVSTHLTGNIKQGHGTESSGSGLFALCTLDGTLKLMEEMEEADKLLWSVQVDHQLFALEKLDVTGNGHEEVVACAWDGQTYIIDHNRTVVRFQVDENIRAFCAGLYACKEGRNSPCLVYVTFNQKIYVYWEVQLERMESTNLVKLLETKPEYHSLLQELGVDPDDLPVTRALLHQTLYHPD</sequence>
<protein>
    <recommendedName>
        <fullName evidence="2">KICSTOR complex protein ITFG2</fullName>
    </recommendedName>
    <alternativeName>
        <fullName evidence="1">Integrin-alpha FG-GAP repeat-containing protein 2</fullName>
    </alternativeName>
</protein>
<reference key="1">
    <citation type="submission" date="2004-11" db="EMBL/GenBank/DDBJ databases">
        <authorList>
            <consortium name="The German cDNA consortium"/>
        </authorList>
    </citation>
    <scope>NUCLEOTIDE SEQUENCE [LARGE SCALE MRNA]</scope>
    <source>
        <tissue>Brain cortex</tissue>
    </source>
</reference>
<gene>
    <name evidence="1" type="primary">ITFG2</name>
</gene>
<accession>Q5RBH8</accession>
<organism>
    <name type="scientific">Pongo abelii</name>
    <name type="common">Sumatran orangutan</name>
    <name type="synonym">Pongo pygmaeus abelii</name>
    <dbReference type="NCBI Taxonomy" id="9601"/>
    <lineage>
        <taxon>Eukaryota</taxon>
        <taxon>Metazoa</taxon>
        <taxon>Chordata</taxon>
        <taxon>Craniata</taxon>
        <taxon>Vertebrata</taxon>
        <taxon>Euteleostomi</taxon>
        <taxon>Mammalia</taxon>
        <taxon>Eutheria</taxon>
        <taxon>Euarchontoglires</taxon>
        <taxon>Primates</taxon>
        <taxon>Haplorrhini</taxon>
        <taxon>Catarrhini</taxon>
        <taxon>Hominidae</taxon>
        <taxon>Pongo</taxon>
    </lineage>
</organism>
<name>ITFG2_PONAB</name>
<comment type="function">
    <text evidence="1">As part of the KICSTOR complex functions in the amino acid-sensing branch of the TORC1 signaling pathway. Recruits, in an amino acid-independent manner, the GATOR1 complex to the lysosomal membranes and allows its interaction with GATOR2 and the RAG GTPases. Functions upstream of the RAG GTPases and is required to negatively regulate mTORC1 signaling in absence of amino acids. In absence of the KICSTOR complex mTORC1 is constitutively localized to the lysosome and activated. The KICSTOR complex is also probably involved in the regulation of mTORC1 by glucose.</text>
</comment>
<comment type="subunit">
    <text evidence="1">Part of the KICSTOR complex composed of KPTN, ITFG2, KICS2 and SZT2. SZT2 probably serves as a link between the other three proteins in the KICSTOR complex and may mediate the direct interaction with the GATOR complex via GATOR1. The KICSTOR complex interacts directly with the GATOR1 complex and most probably indirectly with the GATOR2 complex in an amino acid-independent manner.</text>
</comment>
<comment type="subcellular location">
    <subcellularLocation>
        <location evidence="1">Lysosome membrane</location>
    </subcellularLocation>
    <text evidence="1">Localization to lysosomes is amino acid-independent.</text>
</comment>
<proteinExistence type="evidence at transcript level"/>
<keyword id="KW-0458">Lysosome</keyword>
<keyword id="KW-0472">Membrane</keyword>
<keyword id="KW-0597">Phosphoprotein</keyword>
<keyword id="KW-1185">Reference proteome</keyword>
<keyword id="KW-0677">Repeat</keyword>
<dbReference type="EMBL" id="CR858670">
    <property type="protein sequence ID" value="CAH90882.1"/>
    <property type="molecule type" value="mRNA"/>
</dbReference>
<dbReference type="RefSeq" id="NP_001125504.1">
    <property type="nucleotide sequence ID" value="NM_001132032.1"/>
</dbReference>
<dbReference type="STRING" id="9601.ENSPPYP00000004733"/>
<dbReference type="GeneID" id="100172413"/>
<dbReference type="KEGG" id="pon:100172413"/>
<dbReference type="CTD" id="55846"/>
<dbReference type="eggNOG" id="ENOG502QUBC">
    <property type="taxonomic scope" value="Eukaryota"/>
</dbReference>
<dbReference type="HOGENOM" id="CLU_021730_0_0_1"/>
<dbReference type="InParanoid" id="Q5RBH8"/>
<dbReference type="OrthoDB" id="9996127at2759"/>
<dbReference type="Proteomes" id="UP000001595">
    <property type="component" value="Unplaced"/>
</dbReference>
<dbReference type="GO" id="GO:0140007">
    <property type="term" value="C:KICSTOR complex"/>
    <property type="evidence" value="ECO:0000250"/>
    <property type="project" value="UniProtKB"/>
</dbReference>
<dbReference type="GO" id="GO:0005765">
    <property type="term" value="C:lysosomal membrane"/>
    <property type="evidence" value="ECO:0000250"/>
    <property type="project" value="UniProtKB"/>
</dbReference>
<dbReference type="GO" id="GO:0034198">
    <property type="term" value="P:cellular response to amino acid starvation"/>
    <property type="evidence" value="ECO:0000250"/>
    <property type="project" value="UniProtKB"/>
</dbReference>
<dbReference type="GO" id="GO:0042149">
    <property type="term" value="P:cellular response to glucose starvation"/>
    <property type="evidence" value="ECO:0000250"/>
    <property type="project" value="UniProtKB"/>
</dbReference>
<dbReference type="GO" id="GO:1904262">
    <property type="term" value="P:negative regulation of TORC1 signaling"/>
    <property type="evidence" value="ECO:0000250"/>
    <property type="project" value="UniProtKB"/>
</dbReference>
<dbReference type="Gene3D" id="2.130.10.130">
    <property type="entry name" value="Integrin alpha, N-terminal"/>
    <property type="match status" value="1"/>
</dbReference>
<dbReference type="InterPro" id="IPR028994">
    <property type="entry name" value="Integrin_alpha_N"/>
</dbReference>
<dbReference type="InterPro" id="IPR031793">
    <property type="entry name" value="KICSTOR_ITFG2"/>
</dbReference>
<dbReference type="InterPro" id="IPR036322">
    <property type="entry name" value="WD40_repeat_dom_sf"/>
</dbReference>
<dbReference type="PANTHER" id="PTHR16317">
    <property type="entry name" value="INTEGRIN ALPHA REPEAT DOMAIN-CONTAINING"/>
    <property type="match status" value="1"/>
</dbReference>
<dbReference type="PANTHER" id="PTHR16317:SF1">
    <property type="entry name" value="KICSTOR COMPLEX PROTEIN ITFG2"/>
    <property type="match status" value="1"/>
</dbReference>
<dbReference type="Pfam" id="PF15907">
    <property type="entry name" value="Itfg2"/>
    <property type="match status" value="1"/>
</dbReference>
<dbReference type="SUPFAM" id="SSF69318">
    <property type="entry name" value="Integrin alpha N-terminal domain"/>
    <property type="match status" value="1"/>
</dbReference>
<dbReference type="SUPFAM" id="SSF50978">
    <property type="entry name" value="WD40 repeat-like"/>
    <property type="match status" value="1"/>
</dbReference>
<evidence type="ECO:0000250" key="1">
    <source>
        <dbReference type="UniProtKB" id="Q969R8"/>
    </source>
</evidence>
<evidence type="ECO:0000305" key="2"/>
<feature type="chain" id="PRO_0000289294" description="KICSTOR complex protein ITFG2">
    <location>
        <begin position="1"/>
        <end position="433"/>
    </location>
</feature>
<feature type="repeat" description="FG-GAP 1; atypical">
    <location>
        <begin position="19"/>
        <end position="48"/>
    </location>
</feature>
<feature type="repeat" description="FG-GAP 2; atypical">
    <location>
        <begin position="126"/>
        <end position="155"/>
    </location>
</feature>
<feature type="modified residue" description="Phosphoserine" evidence="1">
    <location>
        <position position="104"/>
    </location>
</feature>
<feature type="modified residue" description="Phosphoserine" evidence="1">
    <location>
        <position position="220"/>
    </location>
</feature>